<reference key="1">
    <citation type="journal article" date="2007" name="Nat. Biotechnol.">
        <title>Genome sequence of the lignocellulose-bioconverting and xylose-fermenting yeast Pichia stipitis.</title>
        <authorList>
            <person name="Jeffries T.W."/>
            <person name="Grigoriev I.V."/>
            <person name="Grimwood J."/>
            <person name="Laplaza J.M."/>
            <person name="Aerts A."/>
            <person name="Salamov A."/>
            <person name="Schmutz J."/>
            <person name="Lindquist E."/>
            <person name="Dehal P."/>
            <person name="Shapiro H."/>
            <person name="Jin Y.-S."/>
            <person name="Passoth V."/>
            <person name="Richardson P.M."/>
        </authorList>
    </citation>
    <scope>NUCLEOTIDE SEQUENCE [LARGE SCALE GENOMIC DNA]</scope>
    <source>
        <strain>ATCC 58785 / CBS 6054 / NBRC 10063 / NRRL Y-11545</strain>
    </source>
</reference>
<protein>
    <recommendedName>
        <fullName>ATP-dependent RNA helicase DBP5</fullName>
        <ecNumber>3.6.4.13</ecNumber>
    </recommendedName>
</protein>
<gene>
    <name type="primary">DBP5</name>
    <name type="ORF">PICST_53355</name>
</gene>
<sequence length="500" mass="55710">MSAEKRVEADAAELLSSLSLGESPAEKKDEKTEEVKKEEAKSEELNKVVEKTEEKVKEANAEDAKPEELKEVGKEENEEPKTNLIQSTYEVKVKLADIQADPNSPLFSVKSFEELGLTPELLKGLYAMKFNKPSKIQEKALPLLISNPPRNMIGQSQSGTGKTAAFSLTMLSRVDPKVPSTQCLCLAPTRELARQTLEVISTMGKFTNITTQLIVPDALPRGSSTNAHIIVGTPGIVMDLIRRKQINVNGVKVFVLDEADNMLDAQGLGDQCVRVKRTLPKTTQLVLFSATFPTKVRQYAEKFVPNANSLELKQEELNVDGIKQLYMDCDSEKHKFEVLCELYGLLTIGSSIIFVERKDTANLLYAKMKAEGHACSILHGGLETSERDRLIDDFREGRSKVLITTNVLARGIDIASVSMVVNYDLPTDKDGNADPSTYLHRIGRTGRFGRVGVSISFIYDKRSYEILMKIKDYFGNVEMTRVPTDDWDEVEKIVKKVIKS</sequence>
<proteinExistence type="inferred from homology"/>
<name>DBP5_PICST</name>
<feature type="chain" id="PRO_0000285143" description="ATP-dependent RNA helicase DBP5">
    <location>
        <begin position="1"/>
        <end position="500"/>
    </location>
</feature>
<feature type="domain" description="Helicase ATP-binding" evidence="2">
    <location>
        <begin position="143"/>
        <end position="310"/>
    </location>
</feature>
<feature type="domain" description="Helicase C-terminal" evidence="3">
    <location>
        <begin position="321"/>
        <end position="498"/>
    </location>
</feature>
<feature type="region of interest" description="Disordered" evidence="4">
    <location>
        <begin position="1"/>
        <end position="83"/>
    </location>
</feature>
<feature type="short sequence motif" description="Q motif">
    <location>
        <begin position="110"/>
        <end position="138"/>
    </location>
</feature>
<feature type="short sequence motif" description="DEAD box">
    <location>
        <begin position="257"/>
        <end position="260"/>
    </location>
</feature>
<feature type="compositionally biased region" description="Low complexity" evidence="4">
    <location>
        <begin position="12"/>
        <end position="23"/>
    </location>
</feature>
<feature type="compositionally biased region" description="Basic and acidic residues" evidence="4">
    <location>
        <begin position="24"/>
        <end position="81"/>
    </location>
</feature>
<feature type="binding site" evidence="2">
    <location>
        <begin position="156"/>
        <end position="163"/>
    </location>
    <ligand>
        <name>ATP</name>
        <dbReference type="ChEBI" id="CHEBI:30616"/>
    </ligand>
</feature>
<accession>A3GH91</accession>
<dbReference type="EC" id="3.6.4.13"/>
<dbReference type="EMBL" id="AAVQ01000002">
    <property type="protein sequence ID" value="EAZ62775.2"/>
    <property type="molecule type" value="Genomic_DNA"/>
</dbReference>
<dbReference type="RefSeq" id="XP_001386798.2">
    <property type="nucleotide sequence ID" value="XM_001386761.1"/>
</dbReference>
<dbReference type="SMR" id="A3GH91"/>
<dbReference type="FunCoup" id="A3GH91">
    <property type="interactions" value="800"/>
</dbReference>
<dbReference type="STRING" id="322104.A3GH91"/>
<dbReference type="GeneID" id="4851640"/>
<dbReference type="KEGG" id="pic:PICST_53355"/>
<dbReference type="eggNOG" id="KOG0332">
    <property type="taxonomic scope" value="Eukaryota"/>
</dbReference>
<dbReference type="HOGENOM" id="CLU_003041_1_0_1"/>
<dbReference type="InParanoid" id="A3GH91"/>
<dbReference type="OMA" id="IAAETRW"/>
<dbReference type="OrthoDB" id="10265785at2759"/>
<dbReference type="Proteomes" id="UP000002258">
    <property type="component" value="Chromosome 1"/>
</dbReference>
<dbReference type="GO" id="GO:0005934">
    <property type="term" value="C:cellular bud tip"/>
    <property type="evidence" value="ECO:0007669"/>
    <property type="project" value="EnsemblFungi"/>
</dbReference>
<dbReference type="GO" id="GO:0010494">
    <property type="term" value="C:cytoplasmic stress granule"/>
    <property type="evidence" value="ECO:0007669"/>
    <property type="project" value="EnsemblFungi"/>
</dbReference>
<dbReference type="GO" id="GO:0031965">
    <property type="term" value="C:nuclear membrane"/>
    <property type="evidence" value="ECO:0007669"/>
    <property type="project" value="UniProtKB-SubCell"/>
</dbReference>
<dbReference type="GO" id="GO:0044614">
    <property type="term" value="C:nuclear pore cytoplasmic filaments"/>
    <property type="evidence" value="ECO:0007669"/>
    <property type="project" value="EnsemblFungi"/>
</dbReference>
<dbReference type="GO" id="GO:0005524">
    <property type="term" value="F:ATP binding"/>
    <property type="evidence" value="ECO:0007669"/>
    <property type="project" value="UniProtKB-KW"/>
</dbReference>
<dbReference type="GO" id="GO:0016887">
    <property type="term" value="F:ATP hydrolysis activity"/>
    <property type="evidence" value="ECO:0007669"/>
    <property type="project" value="RHEA"/>
</dbReference>
<dbReference type="GO" id="GO:0000822">
    <property type="term" value="F:inositol hexakisphosphate binding"/>
    <property type="evidence" value="ECO:0007669"/>
    <property type="project" value="EnsemblFungi"/>
</dbReference>
<dbReference type="GO" id="GO:0003723">
    <property type="term" value="F:RNA binding"/>
    <property type="evidence" value="ECO:0007669"/>
    <property type="project" value="UniProtKB-KW"/>
</dbReference>
<dbReference type="GO" id="GO:0003724">
    <property type="term" value="F:RNA helicase activity"/>
    <property type="evidence" value="ECO:0007669"/>
    <property type="project" value="UniProtKB-EC"/>
</dbReference>
<dbReference type="GO" id="GO:0016973">
    <property type="term" value="P:poly(A)+ mRNA export from nucleus"/>
    <property type="evidence" value="ECO:0007669"/>
    <property type="project" value="EnsemblFungi"/>
</dbReference>
<dbReference type="GO" id="GO:0015031">
    <property type="term" value="P:protein transport"/>
    <property type="evidence" value="ECO:0007669"/>
    <property type="project" value="UniProtKB-KW"/>
</dbReference>
<dbReference type="GO" id="GO:0006415">
    <property type="term" value="P:translational termination"/>
    <property type="evidence" value="ECO:0007669"/>
    <property type="project" value="EnsemblFungi"/>
</dbReference>
<dbReference type="GO" id="GO:0006409">
    <property type="term" value="P:tRNA export from nucleus"/>
    <property type="evidence" value="ECO:0007669"/>
    <property type="project" value="EnsemblFungi"/>
</dbReference>
<dbReference type="CDD" id="cd17963">
    <property type="entry name" value="DEADc_DDX19_DDX25"/>
    <property type="match status" value="1"/>
</dbReference>
<dbReference type="CDD" id="cd18787">
    <property type="entry name" value="SF2_C_DEAD"/>
    <property type="match status" value="1"/>
</dbReference>
<dbReference type="FunFam" id="3.40.50.300:FF:000849">
    <property type="entry name" value="ATP-dependent RNA helicase DBP5"/>
    <property type="match status" value="1"/>
</dbReference>
<dbReference type="FunFam" id="3.40.50.300:FF:000318">
    <property type="entry name" value="ATP-dependent RNA helicase DDX19B"/>
    <property type="match status" value="1"/>
</dbReference>
<dbReference type="Gene3D" id="3.40.50.300">
    <property type="entry name" value="P-loop containing nucleotide triphosphate hydrolases"/>
    <property type="match status" value="2"/>
</dbReference>
<dbReference type="InterPro" id="IPR011545">
    <property type="entry name" value="DEAD/DEAH_box_helicase_dom"/>
</dbReference>
<dbReference type="InterPro" id="IPR014001">
    <property type="entry name" value="Helicase_ATP-bd"/>
</dbReference>
<dbReference type="InterPro" id="IPR001650">
    <property type="entry name" value="Helicase_C-like"/>
</dbReference>
<dbReference type="InterPro" id="IPR027417">
    <property type="entry name" value="P-loop_NTPase"/>
</dbReference>
<dbReference type="InterPro" id="IPR000629">
    <property type="entry name" value="RNA-helicase_DEAD-box_CS"/>
</dbReference>
<dbReference type="InterPro" id="IPR014014">
    <property type="entry name" value="RNA_helicase_DEAD_Q_motif"/>
</dbReference>
<dbReference type="PANTHER" id="PTHR47958">
    <property type="entry name" value="ATP-DEPENDENT RNA HELICASE DBP3"/>
    <property type="match status" value="1"/>
</dbReference>
<dbReference type="Pfam" id="PF00270">
    <property type="entry name" value="DEAD"/>
    <property type="match status" value="1"/>
</dbReference>
<dbReference type="Pfam" id="PF00271">
    <property type="entry name" value="Helicase_C"/>
    <property type="match status" value="1"/>
</dbReference>
<dbReference type="SMART" id="SM00487">
    <property type="entry name" value="DEXDc"/>
    <property type="match status" value="1"/>
</dbReference>
<dbReference type="SMART" id="SM00490">
    <property type="entry name" value="HELICc"/>
    <property type="match status" value="1"/>
</dbReference>
<dbReference type="SUPFAM" id="SSF52540">
    <property type="entry name" value="P-loop containing nucleoside triphosphate hydrolases"/>
    <property type="match status" value="1"/>
</dbReference>
<dbReference type="PROSITE" id="PS00039">
    <property type="entry name" value="DEAD_ATP_HELICASE"/>
    <property type="match status" value="1"/>
</dbReference>
<dbReference type="PROSITE" id="PS51192">
    <property type="entry name" value="HELICASE_ATP_BIND_1"/>
    <property type="match status" value="1"/>
</dbReference>
<dbReference type="PROSITE" id="PS51194">
    <property type="entry name" value="HELICASE_CTER"/>
    <property type="match status" value="1"/>
</dbReference>
<dbReference type="PROSITE" id="PS51195">
    <property type="entry name" value="Q_MOTIF"/>
    <property type="match status" value="1"/>
</dbReference>
<organism>
    <name type="scientific">Scheffersomyces stipitis (strain ATCC 58785 / CBS 6054 / NBRC 10063 / NRRL Y-11545)</name>
    <name type="common">Yeast</name>
    <name type="synonym">Pichia stipitis</name>
    <dbReference type="NCBI Taxonomy" id="322104"/>
    <lineage>
        <taxon>Eukaryota</taxon>
        <taxon>Fungi</taxon>
        <taxon>Dikarya</taxon>
        <taxon>Ascomycota</taxon>
        <taxon>Saccharomycotina</taxon>
        <taxon>Pichiomycetes</taxon>
        <taxon>Debaryomycetaceae</taxon>
        <taxon>Scheffersomyces</taxon>
    </lineage>
</organism>
<evidence type="ECO:0000250" key="1"/>
<evidence type="ECO:0000255" key="2">
    <source>
        <dbReference type="PROSITE-ProRule" id="PRU00541"/>
    </source>
</evidence>
<evidence type="ECO:0000255" key="3">
    <source>
        <dbReference type="PROSITE-ProRule" id="PRU00542"/>
    </source>
</evidence>
<evidence type="ECO:0000256" key="4">
    <source>
        <dbReference type="SAM" id="MobiDB-lite"/>
    </source>
</evidence>
<evidence type="ECO:0000305" key="5"/>
<keyword id="KW-0067">ATP-binding</keyword>
<keyword id="KW-0963">Cytoplasm</keyword>
<keyword id="KW-0347">Helicase</keyword>
<keyword id="KW-0378">Hydrolase</keyword>
<keyword id="KW-0472">Membrane</keyword>
<keyword id="KW-0509">mRNA transport</keyword>
<keyword id="KW-0906">Nuclear pore complex</keyword>
<keyword id="KW-0547">Nucleotide-binding</keyword>
<keyword id="KW-0539">Nucleus</keyword>
<keyword id="KW-0653">Protein transport</keyword>
<keyword id="KW-1185">Reference proteome</keyword>
<keyword id="KW-0694">RNA-binding</keyword>
<keyword id="KW-0811">Translocation</keyword>
<keyword id="KW-0813">Transport</keyword>
<comment type="function">
    <text evidence="1">ATP-dependent RNA helicase associated with the nuclear pore complex and essential for mRNA export from the nucleus. May participate in a terminal step of mRNA export through the removal of proteins that accompany mRNA through the nucleopore complex. May also be involved in early transcription (By similarity).</text>
</comment>
<comment type="catalytic activity">
    <reaction>
        <text>ATP + H2O = ADP + phosphate + H(+)</text>
        <dbReference type="Rhea" id="RHEA:13065"/>
        <dbReference type="ChEBI" id="CHEBI:15377"/>
        <dbReference type="ChEBI" id="CHEBI:15378"/>
        <dbReference type="ChEBI" id="CHEBI:30616"/>
        <dbReference type="ChEBI" id="CHEBI:43474"/>
        <dbReference type="ChEBI" id="CHEBI:456216"/>
        <dbReference type="EC" id="3.6.4.13"/>
    </reaction>
</comment>
<comment type="subunit">
    <text evidence="1">Associates with the nuclear pore complex.</text>
</comment>
<comment type="subcellular location">
    <subcellularLocation>
        <location evidence="1">Cytoplasm</location>
    </subcellularLocation>
    <subcellularLocation>
        <location>Nucleus</location>
        <location>Nuclear pore complex</location>
    </subcellularLocation>
    <subcellularLocation>
        <location evidence="1">Nucleus membrane</location>
        <topology evidence="1">Peripheral membrane protein</topology>
        <orientation evidence="1">Cytoplasmic side</orientation>
    </subcellularLocation>
    <text evidence="1">Nuclear pore complex cytoplasmic fibrils.</text>
</comment>
<comment type="domain">
    <text>The Q motif is unique to and characteristic of the DEAD box family of RNA helicases and controls ATP binding and hydrolysis.</text>
</comment>
<comment type="similarity">
    <text evidence="5">Belongs to the DEAD box helicase family. DDX19/DBP5 subfamily.</text>
</comment>